<accession>A5I2S0</accession>
<accession>A7G481</accession>
<organism>
    <name type="scientific">Clostridium botulinum (strain Hall / ATCC 3502 / NCTC 13319 / Type A)</name>
    <dbReference type="NCBI Taxonomy" id="441771"/>
    <lineage>
        <taxon>Bacteria</taxon>
        <taxon>Bacillati</taxon>
        <taxon>Bacillota</taxon>
        <taxon>Clostridia</taxon>
        <taxon>Eubacteriales</taxon>
        <taxon>Clostridiaceae</taxon>
        <taxon>Clostridium</taxon>
    </lineage>
</organism>
<comment type="function">
    <text evidence="1">Catalyzes the transfer of a dimethylallyl group onto the adenine at position 37 in tRNAs that read codons beginning with uridine, leading to the formation of N6-(dimethylallyl)adenosine (i(6)A).</text>
</comment>
<comment type="catalytic activity">
    <reaction evidence="1">
        <text>adenosine(37) in tRNA + dimethylallyl diphosphate = N(6)-dimethylallyladenosine(37) in tRNA + diphosphate</text>
        <dbReference type="Rhea" id="RHEA:26482"/>
        <dbReference type="Rhea" id="RHEA-COMP:10162"/>
        <dbReference type="Rhea" id="RHEA-COMP:10375"/>
        <dbReference type="ChEBI" id="CHEBI:33019"/>
        <dbReference type="ChEBI" id="CHEBI:57623"/>
        <dbReference type="ChEBI" id="CHEBI:74411"/>
        <dbReference type="ChEBI" id="CHEBI:74415"/>
        <dbReference type="EC" id="2.5.1.75"/>
    </reaction>
</comment>
<comment type="cofactor">
    <cofactor evidence="1">
        <name>Mg(2+)</name>
        <dbReference type="ChEBI" id="CHEBI:18420"/>
    </cofactor>
</comment>
<comment type="subunit">
    <text evidence="1">Monomer.</text>
</comment>
<comment type="similarity">
    <text evidence="1">Belongs to the IPP transferase family.</text>
</comment>
<feature type="chain" id="PRO_1000020586" description="tRNA dimethylallyltransferase">
    <location>
        <begin position="1"/>
        <end position="311"/>
    </location>
</feature>
<feature type="region of interest" description="Interaction with substrate tRNA" evidence="1">
    <location>
        <begin position="34"/>
        <end position="37"/>
    </location>
</feature>
<feature type="binding site" evidence="1">
    <location>
        <begin position="9"/>
        <end position="16"/>
    </location>
    <ligand>
        <name>ATP</name>
        <dbReference type="ChEBI" id="CHEBI:30616"/>
    </ligand>
</feature>
<feature type="binding site" evidence="1">
    <location>
        <begin position="11"/>
        <end position="16"/>
    </location>
    <ligand>
        <name>substrate</name>
    </ligand>
</feature>
<feature type="site" description="Interaction with substrate tRNA" evidence="1">
    <location>
        <position position="100"/>
    </location>
</feature>
<feature type="site" description="Interaction with substrate tRNA" evidence="1">
    <location>
        <position position="123"/>
    </location>
</feature>
<protein>
    <recommendedName>
        <fullName evidence="1">tRNA dimethylallyltransferase</fullName>
        <ecNumber evidence="1">2.5.1.75</ecNumber>
    </recommendedName>
    <alternativeName>
        <fullName evidence="1">Dimethylallyl diphosphate:tRNA dimethylallyltransferase</fullName>
        <shortName evidence="1">DMAPP:tRNA dimethylallyltransferase</shortName>
        <shortName evidence="1">DMATase</shortName>
    </alternativeName>
    <alternativeName>
        <fullName evidence="1">Isopentenyl-diphosphate:tRNA isopentenyltransferase</fullName>
        <shortName evidence="1">IPP transferase</shortName>
        <shortName evidence="1">IPPT</shortName>
        <shortName evidence="1">IPTase</shortName>
    </alternativeName>
</protein>
<evidence type="ECO:0000255" key="1">
    <source>
        <dbReference type="HAMAP-Rule" id="MF_00185"/>
    </source>
</evidence>
<dbReference type="EC" id="2.5.1.75" evidence="1"/>
<dbReference type="EMBL" id="CP000727">
    <property type="protein sequence ID" value="ABS38629.1"/>
    <property type="molecule type" value="Genomic_DNA"/>
</dbReference>
<dbReference type="EMBL" id="AM412317">
    <property type="protein sequence ID" value="CAL83337.1"/>
    <property type="molecule type" value="Genomic_DNA"/>
</dbReference>
<dbReference type="RefSeq" id="WP_011986379.1">
    <property type="nucleotide sequence ID" value="NC_009698.1"/>
</dbReference>
<dbReference type="RefSeq" id="YP_001254298.1">
    <property type="nucleotide sequence ID" value="NC_009495.1"/>
</dbReference>
<dbReference type="RefSeq" id="YP_001387596.1">
    <property type="nucleotide sequence ID" value="NC_009698.1"/>
</dbReference>
<dbReference type="SMR" id="A5I2S0"/>
<dbReference type="GeneID" id="5186142"/>
<dbReference type="KEGG" id="cbh:CLC_1740"/>
<dbReference type="KEGG" id="cbo:CBO1798"/>
<dbReference type="PATRIC" id="fig|413999.7.peg.1769"/>
<dbReference type="HOGENOM" id="CLU_032616_0_1_9"/>
<dbReference type="PRO" id="PR:A5I2S0"/>
<dbReference type="Proteomes" id="UP000001986">
    <property type="component" value="Chromosome"/>
</dbReference>
<dbReference type="GO" id="GO:0005524">
    <property type="term" value="F:ATP binding"/>
    <property type="evidence" value="ECO:0007669"/>
    <property type="project" value="UniProtKB-UniRule"/>
</dbReference>
<dbReference type="GO" id="GO:0052381">
    <property type="term" value="F:tRNA dimethylallyltransferase activity"/>
    <property type="evidence" value="ECO:0000318"/>
    <property type="project" value="GO_Central"/>
</dbReference>
<dbReference type="GO" id="GO:0006400">
    <property type="term" value="P:tRNA modification"/>
    <property type="evidence" value="ECO:0000318"/>
    <property type="project" value="GO_Central"/>
</dbReference>
<dbReference type="FunFam" id="1.10.20.140:FF:000001">
    <property type="entry name" value="tRNA dimethylallyltransferase"/>
    <property type="match status" value="1"/>
</dbReference>
<dbReference type="Gene3D" id="1.10.20.140">
    <property type="match status" value="1"/>
</dbReference>
<dbReference type="Gene3D" id="3.40.50.300">
    <property type="entry name" value="P-loop containing nucleotide triphosphate hydrolases"/>
    <property type="match status" value="1"/>
</dbReference>
<dbReference type="HAMAP" id="MF_00185">
    <property type="entry name" value="IPP_trans"/>
    <property type="match status" value="1"/>
</dbReference>
<dbReference type="InterPro" id="IPR039657">
    <property type="entry name" value="Dimethylallyltransferase"/>
</dbReference>
<dbReference type="InterPro" id="IPR018022">
    <property type="entry name" value="IPT"/>
</dbReference>
<dbReference type="InterPro" id="IPR027417">
    <property type="entry name" value="P-loop_NTPase"/>
</dbReference>
<dbReference type="NCBIfam" id="TIGR00174">
    <property type="entry name" value="miaA"/>
    <property type="match status" value="1"/>
</dbReference>
<dbReference type="PANTHER" id="PTHR11088">
    <property type="entry name" value="TRNA DIMETHYLALLYLTRANSFERASE"/>
    <property type="match status" value="1"/>
</dbReference>
<dbReference type="PANTHER" id="PTHR11088:SF60">
    <property type="entry name" value="TRNA DIMETHYLALLYLTRANSFERASE"/>
    <property type="match status" value="1"/>
</dbReference>
<dbReference type="Pfam" id="PF01715">
    <property type="entry name" value="IPPT"/>
    <property type="match status" value="1"/>
</dbReference>
<dbReference type="SUPFAM" id="SSF52540">
    <property type="entry name" value="P-loop containing nucleoside triphosphate hydrolases"/>
    <property type="match status" value="2"/>
</dbReference>
<sequence>MIDLLIIAGPTAVGKTDISIKLAEKLNGEIISADSMQIYKYMDIGSAKITKDEMKGIPHHLIDVVEPHEEFNVSSFKALAEKSIKDIWNRGKLPIIAGGTGLYINSLIYNYDFTDADRDEKYREYLTKLAEDKGKEYVHSLLKDIDKESYEKLYPNDLKRVVRALEVYKITGKSISEYTKENEKKLYDIPYNVNYFILNMNREVLYERINKRVDIMMGKGLIEEVKKLESMGYTPDMQSMKGIGYKEVLFYLNGDISLDEAIYLIKKGSRNYAKRQLTWFRKDKRSIWIDKDKYRSEEEIVDKIIKMVKDK</sequence>
<reference key="1">
    <citation type="journal article" date="2007" name="Genome Res.">
        <title>Genome sequence of a proteolytic (Group I) Clostridium botulinum strain Hall A and comparative analysis of the clostridial genomes.</title>
        <authorList>
            <person name="Sebaihia M."/>
            <person name="Peck M.W."/>
            <person name="Minton N.P."/>
            <person name="Thomson N.R."/>
            <person name="Holden M.T.G."/>
            <person name="Mitchell W.J."/>
            <person name="Carter A.T."/>
            <person name="Bentley S.D."/>
            <person name="Mason D.R."/>
            <person name="Crossman L."/>
            <person name="Paul C.J."/>
            <person name="Ivens A."/>
            <person name="Wells-Bennik M.H.J."/>
            <person name="Davis I.J."/>
            <person name="Cerdeno-Tarraga A.M."/>
            <person name="Churcher C."/>
            <person name="Quail M.A."/>
            <person name="Chillingworth T."/>
            <person name="Feltwell T."/>
            <person name="Fraser A."/>
            <person name="Goodhead I."/>
            <person name="Hance Z."/>
            <person name="Jagels K."/>
            <person name="Larke N."/>
            <person name="Maddison M."/>
            <person name="Moule S."/>
            <person name="Mungall K."/>
            <person name="Norbertczak H."/>
            <person name="Rabbinowitsch E."/>
            <person name="Sanders M."/>
            <person name="Simmonds M."/>
            <person name="White B."/>
            <person name="Whithead S."/>
            <person name="Parkhill J."/>
        </authorList>
    </citation>
    <scope>NUCLEOTIDE SEQUENCE [LARGE SCALE GENOMIC DNA]</scope>
    <source>
        <strain>Hall / ATCC 3502 / NCTC 13319 / Type A</strain>
    </source>
</reference>
<reference key="2">
    <citation type="journal article" date="2007" name="PLoS ONE">
        <title>Analysis of the neurotoxin complex genes in Clostridium botulinum A1-A4 and B1 strains: BoNT/A3, /Ba4 and /B1 clusters are located within plasmids.</title>
        <authorList>
            <person name="Smith T.J."/>
            <person name="Hill K.K."/>
            <person name="Foley B.T."/>
            <person name="Detter J.C."/>
            <person name="Munk A.C."/>
            <person name="Bruce D.C."/>
            <person name="Doggett N.A."/>
            <person name="Smith L.A."/>
            <person name="Marks J.D."/>
            <person name="Xie G."/>
            <person name="Brettin T.S."/>
        </authorList>
    </citation>
    <scope>NUCLEOTIDE SEQUENCE [LARGE SCALE GENOMIC DNA]</scope>
    <source>
        <strain>Hall / ATCC 3502 / NCTC 13319 / Type A</strain>
    </source>
</reference>
<keyword id="KW-0067">ATP-binding</keyword>
<keyword id="KW-0460">Magnesium</keyword>
<keyword id="KW-0547">Nucleotide-binding</keyword>
<keyword id="KW-1185">Reference proteome</keyword>
<keyword id="KW-0808">Transferase</keyword>
<keyword id="KW-0819">tRNA processing</keyword>
<name>MIAA_CLOBH</name>
<gene>
    <name evidence="1" type="primary">miaA</name>
    <name type="ordered locus">CBO1798</name>
    <name type="ordered locus">CLC_1740</name>
</gene>
<proteinExistence type="inferred from homology"/>